<feature type="chain" id="PRO_0000293580" description="HTH-type transcriptional repressor FabR">
    <location>
        <begin position="1"/>
        <end position="211"/>
    </location>
</feature>
<feature type="domain" description="HTH tetR-type" evidence="1">
    <location>
        <begin position="10"/>
        <end position="70"/>
    </location>
</feature>
<feature type="DNA-binding region" description="H-T-H motif" evidence="1">
    <location>
        <begin position="33"/>
        <end position="52"/>
    </location>
</feature>
<organism>
    <name type="scientific">Yersinia pestis bv. Antiqua (strain Antiqua)</name>
    <dbReference type="NCBI Taxonomy" id="360102"/>
    <lineage>
        <taxon>Bacteria</taxon>
        <taxon>Pseudomonadati</taxon>
        <taxon>Pseudomonadota</taxon>
        <taxon>Gammaproteobacteria</taxon>
        <taxon>Enterobacterales</taxon>
        <taxon>Yersiniaceae</taxon>
        <taxon>Yersinia</taxon>
    </lineage>
</organism>
<comment type="function">
    <text evidence="1">Represses the transcription of fabB, involved in unsaturated fatty acid (UFA) biosynthesis. By controlling UFA production, FabR directly influences the physical properties of the membrane bilayer.</text>
</comment>
<comment type="subunit">
    <text evidence="1">Homodimer.</text>
</comment>
<comment type="subcellular location">
    <subcellularLocation>
        <location evidence="1">Cytoplasm</location>
    </subcellularLocation>
</comment>
<protein>
    <recommendedName>
        <fullName evidence="1">HTH-type transcriptional repressor FabR</fullName>
    </recommendedName>
</protein>
<evidence type="ECO:0000255" key="1">
    <source>
        <dbReference type="HAMAP-Rule" id="MF_01190"/>
    </source>
</evidence>
<sequence>MGVRAQQKERTRRSLIEAAFSQLSAERSFASLSLREVSREAGIAPTSFYRHFRDVDELGLTMVDESGLMLRQLMRQARQRIAKGGSVIRTSVSTFMEFIGNNPNAFRLLLRERSGTSAAFRAAVAREIQHFIAELADYLELENHMPRSFTEAQAEAMVTIVFSAGAEVLDVDIEQRRQLEERLVLQLRMISKGAYYWYRREQEKLAASRVE</sequence>
<keyword id="KW-0963">Cytoplasm</keyword>
<keyword id="KW-0238">DNA-binding</keyword>
<keyword id="KW-0275">Fatty acid biosynthesis</keyword>
<keyword id="KW-0276">Fatty acid metabolism</keyword>
<keyword id="KW-0444">Lipid biosynthesis</keyword>
<keyword id="KW-0443">Lipid metabolism</keyword>
<keyword id="KW-0678">Repressor</keyword>
<keyword id="KW-0804">Transcription</keyword>
<keyword id="KW-0805">Transcription regulation</keyword>
<name>FABR_YERPA</name>
<dbReference type="EMBL" id="CP000308">
    <property type="protein sequence ID" value="ABG12078.1"/>
    <property type="molecule type" value="Genomic_DNA"/>
</dbReference>
<dbReference type="RefSeq" id="WP_002209476.1">
    <property type="nucleotide sequence ID" value="NZ_CP009906.1"/>
</dbReference>
<dbReference type="SMR" id="Q1CBU4"/>
<dbReference type="GeneID" id="96663601"/>
<dbReference type="KEGG" id="ypa:YPA_0109"/>
<dbReference type="Proteomes" id="UP000001971">
    <property type="component" value="Chromosome"/>
</dbReference>
<dbReference type="GO" id="GO:0005737">
    <property type="term" value="C:cytoplasm"/>
    <property type="evidence" value="ECO:0007669"/>
    <property type="project" value="UniProtKB-SubCell"/>
</dbReference>
<dbReference type="GO" id="GO:0003677">
    <property type="term" value="F:DNA binding"/>
    <property type="evidence" value="ECO:0007669"/>
    <property type="project" value="UniProtKB-KW"/>
</dbReference>
<dbReference type="GO" id="GO:0003700">
    <property type="term" value="F:DNA-binding transcription factor activity"/>
    <property type="evidence" value="ECO:0007669"/>
    <property type="project" value="UniProtKB-UniRule"/>
</dbReference>
<dbReference type="GO" id="GO:0006633">
    <property type="term" value="P:fatty acid biosynthetic process"/>
    <property type="evidence" value="ECO:0007669"/>
    <property type="project" value="UniProtKB-UniRule"/>
</dbReference>
<dbReference type="GO" id="GO:0045717">
    <property type="term" value="P:negative regulation of fatty acid biosynthetic process"/>
    <property type="evidence" value="ECO:0007669"/>
    <property type="project" value="UniProtKB-UniRule"/>
</dbReference>
<dbReference type="FunFam" id="1.10.10.60:FF:000034">
    <property type="entry name" value="HTH-type transcriptional repressor FabR"/>
    <property type="match status" value="1"/>
</dbReference>
<dbReference type="FunFam" id="1.10.357.10:FF:000001">
    <property type="entry name" value="HTH-type transcriptional repressor FabR"/>
    <property type="match status" value="1"/>
</dbReference>
<dbReference type="Gene3D" id="1.10.10.60">
    <property type="entry name" value="Homeodomain-like"/>
    <property type="match status" value="1"/>
</dbReference>
<dbReference type="Gene3D" id="1.10.357.10">
    <property type="entry name" value="Tetracycline Repressor, domain 2"/>
    <property type="match status" value="1"/>
</dbReference>
<dbReference type="HAMAP" id="MF_01190">
    <property type="entry name" value="HTH_type_FabR"/>
    <property type="match status" value="1"/>
</dbReference>
<dbReference type="InterPro" id="IPR054129">
    <property type="entry name" value="DesT_TetR_C"/>
</dbReference>
<dbReference type="InterPro" id="IPR009057">
    <property type="entry name" value="Homeodomain-like_sf"/>
</dbReference>
<dbReference type="InterPro" id="IPR001647">
    <property type="entry name" value="HTH_TetR"/>
</dbReference>
<dbReference type="InterPro" id="IPR050692">
    <property type="entry name" value="HTH_transcr_repressor_FabR"/>
</dbReference>
<dbReference type="InterPro" id="IPR023764">
    <property type="entry name" value="Tscrpt_reg_HTH_FabR"/>
</dbReference>
<dbReference type="NCBIfam" id="NF008402">
    <property type="entry name" value="PRK11202.1"/>
    <property type="match status" value="1"/>
</dbReference>
<dbReference type="PANTHER" id="PTHR47752">
    <property type="entry name" value="HTH-TYPE TRANSCRIPTIONAL REPRESSOR FABR"/>
    <property type="match status" value="1"/>
</dbReference>
<dbReference type="PANTHER" id="PTHR47752:SF1">
    <property type="entry name" value="HTH-TYPE TRANSCRIPTIONAL REPRESSOR FABR"/>
    <property type="match status" value="1"/>
</dbReference>
<dbReference type="Pfam" id="PF21943">
    <property type="entry name" value="TetR_C_46"/>
    <property type="match status" value="1"/>
</dbReference>
<dbReference type="Pfam" id="PF00440">
    <property type="entry name" value="TetR_N"/>
    <property type="match status" value="1"/>
</dbReference>
<dbReference type="SUPFAM" id="SSF46689">
    <property type="entry name" value="Homeodomain-like"/>
    <property type="match status" value="1"/>
</dbReference>
<dbReference type="PROSITE" id="PS50977">
    <property type="entry name" value="HTH_TETR_2"/>
    <property type="match status" value="1"/>
</dbReference>
<reference key="1">
    <citation type="journal article" date="2006" name="J. Bacteriol.">
        <title>Complete genome sequence of Yersinia pestis strains Antiqua and Nepal516: evidence of gene reduction in an emerging pathogen.</title>
        <authorList>
            <person name="Chain P.S.G."/>
            <person name="Hu P."/>
            <person name="Malfatti S.A."/>
            <person name="Radnedge L."/>
            <person name="Larimer F."/>
            <person name="Vergez L.M."/>
            <person name="Worsham P."/>
            <person name="Chu M.C."/>
            <person name="Andersen G.L."/>
        </authorList>
    </citation>
    <scope>NUCLEOTIDE SEQUENCE [LARGE SCALE GENOMIC DNA]</scope>
    <source>
        <strain>Antiqua</strain>
    </source>
</reference>
<accession>Q1CBU4</accession>
<proteinExistence type="inferred from homology"/>
<gene>
    <name evidence="1" type="primary">fabR</name>
    <name type="ordered locus">YPA_0109</name>
</gene>